<dbReference type="EMBL" id="BX950851">
    <property type="protein sequence ID" value="CAG73951.1"/>
    <property type="molecule type" value="Genomic_DNA"/>
</dbReference>
<dbReference type="RefSeq" id="WP_011092638.1">
    <property type="nucleotide sequence ID" value="NC_004547.2"/>
</dbReference>
<dbReference type="SMR" id="Q6D8D4"/>
<dbReference type="STRING" id="218491.ECA1040"/>
<dbReference type="GeneID" id="57207869"/>
<dbReference type="KEGG" id="eca:ECA1040"/>
<dbReference type="PATRIC" id="fig|218491.5.peg.1048"/>
<dbReference type="eggNOG" id="COG2825">
    <property type="taxonomic scope" value="Bacteria"/>
</dbReference>
<dbReference type="HOGENOM" id="CLU_101388_2_0_6"/>
<dbReference type="OrthoDB" id="7061584at2"/>
<dbReference type="Proteomes" id="UP000007966">
    <property type="component" value="Chromosome"/>
</dbReference>
<dbReference type="GO" id="GO:0005829">
    <property type="term" value="C:cytosol"/>
    <property type="evidence" value="ECO:0007669"/>
    <property type="project" value="TreeGrafter"/>
</dbReference>
<dbReference type="GO" id="GO:0042597">
    <property type="term" value="C:periplasmic space"/>
    <property type="evidence" value="ECO:0007669"/>
    <property type="project" value="UniProtKB-SubCell"/>
</dbReference>
<dbReference type="GO" id="GO:0051082">
    <property type="term" value="F:unfolded protein binding"/>
    <property type="evidence" value="ECO:0007669"/>
    <property type="project" value="InterPro"/>
</dbReference>
<dbReference type="GO" id="GO:0061077">
    <property type="term" value="P:chaperone-mediated protein folding"/>
    <property type="evidence" value="ECO:0007669"/>
    <property type="project" value="TreeGrafter"/>
</dbReference>
<dbReference type="GO" id="GO:0050821">
    <property type="term" value="P:protein stabilization"/>
    <property type="evidence" value="ECO:0007669"/>
    <property type="project" value="TreeGrafter"/>
</dbReference>
<dbReference type="Gene3D" id="3.30.910.20">
    <property type="entry name" value="Skp domain"/>
    <property type="match status" value="1"/>
</dbReference>
<dbReference type="InterPro" id="IPR005632">
    <property type="entry name" value="Chaperone_Skp"/>
</dbReference>
<dbReference type="InterPro" id="IPR024930">
    <property type="entry name" value="Skp_dom_sf"/>
</dbReference>
<dbReference type="NCBIfam" id="NF008047">
    <property type="entry name" value="PRK10780.1"/>
    <property type="match status" value="1"/>
</dbReference>
<dbReference type="PANTHER" id="PTHR35089">
    <property type="entry name" value="CHAPERONE PROTEIN SKP"/>
    <property type="match status" value="1"/>
</dbReference>
<dbReference type="PANTHER" id="PTHR35089:SF1">
    <property type="entry name" value="CHAPERONE PROTEIN SKP"/>
    <property type="match status" value="1"/>
</dbReference>
<dbReference type="Pfam" id="PF03938">
    <property type="entry name" value="OmpH"/>
    <property type="match status" value="1"/>
</dbReference>
<dbReference type="PIRSF" id="PIRSF002094">
    <property type="entry name" value="OMP26_Skp"/>
    <property type="match status" value="1"/>
</dbReference>
<dbReference type="SMART" id="SM00935">
    <property type="entry name" value="OmpH"/>
    <property type="match status" value="1"/>
</dbReference>
<dbReference type="SUPFAM" id="SSF111384">
    <property type="entry name" value="OmpH-like"/>
    <property type="match status" value="1"/>
</dbReference>
<protein>
    <recommendedName>
        <fullName>Chaperone protein Skp</fullName>
    </recommendedName>
</protein>
<comment type="function">
    <text evidence="1">Molecular chaperone that interacts specifically with outer membrane proteins, thus maintaining the solubility of early folding intermediates during passage through the periplasm.</text>
</comment>
<comment type="subunit">
    <text evidence="1">Homotrimer.</text>
</comment>
<comment type="subcellular location">
    <subcellularLocation>
        <location evidence="1">Periplasm</location>
    </subcellularLocation>
</comment>
<comment type="similarity">
    <text evidence="4">Belongs to the Skp family.</text>
</comment>
<evidence type="ECO:0000250" key="1"/>
<evidence type="ECO:0000255" key="2"/>
<evidence type="ECO:0000256" key="3">
    <source>
        <dbReference type="SAM" id="MobiDB-lite"/>
    </source>
</evidence>
<evidence type="ECO:0000305" key="4"/>
<proteinExistence type="inferred from homology"/>
<keyword id="KW-0143">Chaperone</keyword>
<keyword id="KW-0574">Periplasm</keyword>
<keyword id="KW-1185">Reference proteome</keyword>
<keyword id="KW-0732">Signal</keyword>
<feature type="signal peptide" evidence="2">
    <location>
        <begin position="1"/>
        <end position="22"/>
    </location>
</feature>
<feature type="chain" id="PRO_0000227888" description="Chaperone protein Skp">
    <location>
        <begin position="23"/>
        <end position="165"/>
    </location>
</feature>
<feature type="region of interest" description="Disordered" evidence="3">
    <location>
        <begin position="70"/>
        <end position="90"/>
    </location>
</feature>
<feature type="region of interest" description="Lipopolysaccharide binding" evidence="2">
    <location>
        <begin position="102"/>
        <end position="113"/>
    </location>
</feature>
<organism>
    <name type="scientific">Pectobacterium atrosepticum (strain SCRI 1043 / ATCC BAA-672)</name>
    <name type="common">Erwinia carotovora subsp. atroseptica</name>
    <dbReference type="NCBI Taxonomy" id="218491"/>
    <lineage>
        <taxon>Bacteria</taxon>
        <taxon>Pseudomonadati</taxon>
        <taxon>Pseudomonadota</taxon>
        <taxon>Gammaproteobacteria</taxon>
        <taxon>Enterobacterales</taxon>
        <taxon>Pectobacteriaceae</taxon>
        <taxon>Pectobacterium</taxon>
    </lineage>
</organism>
<name>SKP_PECAS</name>
<reference key="1">
    <citation type="journal article" date="2004" name="Proc. Natl. Acad. Sci. U.S.A.">
        <title>Genome sequence of the enterobacterial phytopathogen Erwinia carotovora subsp. atroseptica and characterization of virulence factors.</title>
        <authorList>
            <person name="Bell K.S."/>
            <person name="Sebaihia M."/>
            <person name="Pritchard L."/>
            <person name="Holden M.T.G."/>
            <person name="Hyman L.J."/>
            <person name="Holeva M.C."/>
            <person name="Thomson N.R."/>
            <person name="Bentley S.D."/>
            <person name="Churcher L.J.C."/>
            <person name="Mungall K."/>
            <person name="Atkin R."/>
            <person name="Bason N."/>
            <person name="Brooks K."/>
            <person name="Chillingworth T."/>
            <person name="Clark K."/>
            <person name="Doggett J."/>
            <person name="Fraser A."/>
            <person name="Hance Z."/>
            <person name="Hauser H."/>
            <person name="Jagels K."/>
            <person name="Moule S."/>
            <person name="Norbertczak H."/>
            <person name="Ormond D."/>
            <person name="Price C."/>
            <person name="Quail M.A."/>
            <person name="Sanders M."/>
            <person name="Walker D."/>
            <person name="Whitehead S."/>
            <person name="Salmond G.P.C."/>
            <person name="Birch P.R.J."/>
            <person name="Parkhill J."/>
            <person name="Toth I.K."/>
        </authorList>
    </citation>
    <scope>NUCLEOTIDE SEQUENCE [LARGE SCALE GENOMIC DNA]</scope>
    <source>
        <strain>SCRI 1043 / ATCC BAA-672</strain>
    </source>
</reference>
<accession>Q6D8D4</accession>
<sequence length="165" mass="18307">MKKWLCAAGLGLVLAASASVQAADKIAVVNVSSIFQQLPQRESVGKQLENEFKGRASELQSMENDLQGKMQKLQRDGSTMKASDRSKMEKDVMAQREQFSTKAQAFEQDNRRRQTEERNKILSRIQDAVKAVATKEGYDVVIDANAVAYVANAKDITADVLKQVK</sequence>
<gene>
    <name type="primary">skp</name>
    <name type="ordered locus">ECA1040</name>
</gene>